<protein>
    <recommendedName>
        <fullName evidence="4">Large ribosomal subunit protein uL3c</fullName>
    </recommendedName>
    <alternativeName>
        <fullName>50S ribosomal protein L3-1, chloroplastic</fullName>
    </alternativeName>
</protein>
<reference key="1">
    <citation type="journal article" date="1999" name="Nature">
        <title>Sequence and analysis of chromosome 2 of the plant Arabidopsis thaliana.</title>
        <authorList>
            <person name="Lin X."/>
            <person name="Kaul S."/>
            <person name="Rounsley S.D."/>
            <person name="Shea T.P."/>
            <person name="Benito M.-I."/>
            <person name="Town C.D."/>
            <person name="Fujii C.Y."/>
            <person name="Mason T.M."/>
            <person name="Bowman C.L."/>
            <person name="Barnstead M.E."/>
            <person name="Feldblyum T.V."/>
            <person name="Buell C.R."/>
            <person name="Ketchum K.A."/>
            <person name="Lee J.J."/>
            <person name="Ronning C.M."/>
            <person name="Koo H.L."/>
            <person name="Moffat K.S."/>
            <person name="Cronin L.A."/>
            <person name="Shen M."/>
            <person name="Pai G."/>
            <person name="Van Aken S."/>
            <person name="Umayam L."/>
            <person name="Tallon L.J."/>
            <person name="Gill J.E."/>
            <person name="Adams M.D."/>
            <person name="Carrera A.J."/>
            <person name="Creasy T.H."/>
            <person name="Goodman H.M."/>
            <person name="Somerville C.R."/>
            <person name="Copenhaver G.P."/>
            <person name="Preuss D."/>
            <person name="Nierman W.C."/>
            <person name="White O."/>
            <person name="Eisen J.A."/>
            <person name="Salzberg S.L."/>
            <person name="Fraser C.M."/>
            <person name="Venter J.C."/>
        </authorList>
    </citation>
    <scope>NUCLEOTIDE SEQUENCE [LARGE SCALE GENOMIC DNA]</scope>
    <source>
        <strain>cv. Columbia</strain>
    </source>
</reference>
<reference key="2">
    <citation type="journal article" date="2017" name="Plant J.">
        <title>Araport11: a complete reannotation of the Arabidopsis thaliana reference genome.</title>
        <authorList>
            <person name="Cheng C.Y."/>
            <person name="Krishnakumar V."/>
            <person name="Chan A.P."/>
            <person name="Thibaud-Nissen F."/>
            <person name="Schobel S."/>
            <person name="Town C.D."/>
        </authorList>
    </citation>
    <scope>GENOME REANNOTATION</scope>
    <source>
        <strain>cv. Columbia</strain>
    </source>
</reference>
<reference key="3">
    <citation type="submission" date="2002-03" db="EMBL/GenBank/DDBJ databases">
        <title>Full-length cDNA from Arabidopsis thaliana.</title>
        <authorList>
            <person name="Brover V.V."/>
            <person name="Troukhan M.E."/>
            <person name="Alexandrov N.A."/>
            <person name="Lu Y.-P."/>
            <person name="Flavell R.B."/>
            <person name="Feldmann K.A."/>
        </authorList>
    </citation>
    <scope>NUCLEOTIDE SEQUENCE [LARGE SCALE MRNA]</scope>
</reference>
<reference key="4">
    <citation type="journal article" date="2023" name="Plant Cell">
        <title>An updated nomenclature for plant ribosomal protein genes.</title>
        <authorList>
            <person name="Scarpin M.R."/>
            <person name="Busche M."/>
            <person name="Martinez R.E."/>
            <person name="Harper L.C."/>
            <person name="Reiser L."/>
            <person name="Szakonyi D."/>
            <person name="Merchante C."/>
            <person name="Lan T."/>
            <person name="Xiong W."/>
            <person name="Mo B."/>
            <person name="Tang G."/>
            <person name="Chen X."/>
            <person name="Bailey-Serres J."/>
            <person name="Browning K.S."/>
            <person name="Brunkard J.O."/>
        </authorList>
    </citation>
    <scope>NOMENCLATURE</scope>
</reference>
<proteinExistence type="evidence at transcript level"/>
<keyword id="KW-0150">Chloroplast</keyword>
<keyword id="KW-0934">Plastid</keyword>
<keyword id="KW-1185">Reference proteome</keyword>
<keyword id="KW-0687">Ribonucleoprotein</keyword>
<keyword id="KW-0689">Ribosomal protein</keyword>
<keyword id="KW-0694">RNA-binding</keyword>
<keyword id="KW-0699">rRNA-binding</keyword>
<keyword id="KW-0809">Transit peptide</keyword>
<gene>
    <name type="primary">RPL3A</name>
    <name type="ordered locus">At2g43030</name>
    <name type="ORF">MFL8.11</name>
</gene>
<dbReference type="EMBL" id="AC006224">
    <property type="protein sequence ID" value="AAD22128.1"/>
    <property type="molecule type" value="Genomic_DNA"/>
</dbReference>
<dbReference type="EMBL" id="CP002685">
    <property type="protein sequence ID" value="AEC10201.1"/>
    <property type="molecule type" value="Genomic_DNA"/>
</dbReference>
<dbReference type="EMBL" id="AY085287">
    <property type="protein sequence ID" value="AAM62519.1"/>
    <property type="molecule type" value="mRNA"/>
</dbReference>
<dbReference type="PIR" id="B84861">
    <property type="entry name" value="B84861"/>
</dbReference>
<dbReference type="RefSeq" id="NP_181831.1">
    <property type="nucleotide sequence ID" value="NM_129864.3"/>
</dbReference>
<dbReference type="SMR" id="Q9SKX4"/>
<dbReference type="BioGRID" id="4242">
    <property type="interactions" value="23"/>
</dbReference>
<dbReference type="FunCoup" id="Q9SKX4">
    <property type="interactions" value="862"/>
</dbReference>
<dbReference type="STRING" id="3702.Q9SKX4"/>
<dbReference type="GlyGen" id="Q9SKX4">
    <property type="glycosylation" value="1 site"/>
</dbReference>
<dbReference type="MetOSite" id="Q9SKX4"/>
<dbReference type="PaxDb" id="3702-AT2G43030.1"/>
<dbReference type="ProteomicsDB" id="234711"/>
<dbReference type="EnsemblPlants" id="AT2G43030.1">
    <property type="protein sequence ID" value="AT2G43030.1"/>
    <property type="gene ID" value="AT2G43030"/>
</dbReference>
<dbReference type="GeneID" id="818905"/>
<dbReference type="Gramene" id="AT2G43030.1">
    <property type="protein sequence ID" value="AT2G43030.1"/>
    <property type="gene ID" value="AT2G43030"/>
</dbReference>
<dbReference type="KEGG" id="ath:AT2G43030"/>
<dbReference type="Araport" id="AT2G43030"/>
<dbReference type="TAIR" id="AT2G43030">
    <property type="gene designation" value="PRPL3"/>
</dbReference>
<dbReference type="eggNOG" id="KOG3141">
    <property type="taxonomic scope" value="Eukaryota"/>
</dbReference>
<dbReference type="HOGENOM" id="CLU_044142_4_1_1"/>
<dbReference type="InParanoid" id="Q9SKX4"/>
<dbReference type="OMA" id="GKNIPCT"/>
<dbReference type="OrthoDB" id="274683at2759"/>
<dbReference type="PhylomeDB" id="Q9SKX4"/>
<dbReference type="CD-CODE" id="4299E36E">
    <property type="entry name" value="Nucleolus"/>
</dbReference>
<dbReference type="PRO" id="PR:Q9SKX4"/>
<dbReference type="Proteomes" id="UP000006548">
    <property type="component" value="Chromosome 2"/>
</dbReference>
<dbReference type="ExpressionAtlas" id="Q9SKX4">
    <property type="expression patterns" value="baseline and differential"/>
</dbReference>
<dbReference type="GO" id="GO:0009507">
    <property type="term" value="C:chloroplast"/>
    <property type="evidence" value="ECO:0007005"/>
    <property type="project" value="TAIR"/>
</dbReference>
<dbReference type="GO" id="GO:0009941">
    <property type="term" value="C:chloroplast envelope"/>
    <property type="evidence" value="ECO:0007005"/>
    <property type="project" value="TAIR"/>
</dbReference>
<dbReference type="GO" id="GO:0009570">
    <property type="term" value="C:chloroplast stroma"/>
    <property type="evidence" value="ECO:0007005"/>
    <property type="project" value="TAIR"/>
</dbReference>
<dbReference type="GO" id="GO:0005829">
    <property type="term" value="C:cytosol"/>
    <property type="evidence" value="ECO:0007005"/>
    <property type="project" value="TAIR"/>
</dbReference>
<dbReference type="GO" id="GO:1990904">
    <property type="term" value="C:ribonucleoprotein complex"/>
    <property type="evidence" value="ECO:0007669"/>
    <property type="project" value="UniProtKB-KW"/>
</dbReference>
<dbReference type="GO" id="GO:0005840">
    <property type="term" value="C:ribosome"/>
    <property type="evidence" value="ECO:0007669"/>
    <property type="project" value="UniProtKB-KW"/>
</dbReference>
<dbReference type="GO" id="GO:0003729">
    <property type="term" value="F:mRNA binding"/>
    <property type="evidence" value="ECO:0000314"/>
    <property type="project" value="TAIR"/>
</dbReference>
<dbReference type="GO" id="GO:0019843">
    <property type="term" value="F:rRNA binding"/>
    <property type="evidence" value="ECO:0007669"/>
    <property type="project" value="UniProtKB-KW"/>
</dbReference>
<dbReference type="GO" id="GO:0003735">
    <property type="term" value="F:structural constituent of ribosome"/>
    <property type="evidence" value="ECO:0007669"/>
    <property type="project" value="InterPro"/>
</dbReference>
<dbReference type="GO" id="GO:0006412">
    <property type="term" value="P:translation"/>
    <property type="evidence" value="ECO:0007669"/>
    <property type="project" value="InterPro"/>
</dbReference>
<dbReference type="FunFam" id="3.30.160.810:FF:000001">
    <property type="entry name" value="50S ribosomal protein L3"/>
    <property type="match status" value="1"/>
</dbReference>
<dbReference type="FunFam" id="2.40.30.10:FF:000065">
    <property type="entry name" value="50S ribosomal protein L3, chloroplastic"/>
    <property type="match status" value="1"/>
</dbReference>
<dbReference type="Gene3D" id="3.30.160.810">
    <property type="match status" value="1"/>
</dbReference>
<dbReference type="Gene3D" id="2.40.30.10">
    <property type="entry name" value="Translation factors"/>
    <property type="match status" value="1"/>
</dbReference>
<dbReference type="HAMAP" id="MF_01325_B">
    <property type="entry name" value="Ribosomal_uL3_B"/>
    <property type="match status" value="1"/>
</dbReference>
<dbReference type="InterPro" id="IPR000597">
    <property type="entry name" value="Ribosomal_uL3"/>
</dbReference>
<dbReference type="InterPro" id="IPR019927">
    <property type="entry name" value="Ribosomal_uL3_bac/org-type"/>
</dbReference>
<dbReference type="InterPro" id="IPR019926">
    <property type="entry name" value="Ribosomal_uL3_CS"/>
</dbReference>
<dbReference type="InterPro" id="IPR009000">
    <property type="entry name" value="Transl_B-barrel_sf"/>
</dbReference>
<dbReference type="NCBIfam" id="TIGR03625">
    <property type="entry name" value="L3_bact"/>
    <property type="match status" value="1"/>
</dbReference>
<dbReference type="PANTHER" id="PTHR11229">
    <property type="entry name" value="50S RIBOSOMAL PROTEIN L3"/>
    <property type="match status" value="1"/>
</dbReference>
<dbReference type="PANTHER" id="PTHR11229:SF16">
    <property type="entry name" value="LARGE RIBOSOMAL SUBUNIT PROTEIN UL3C"/>
    <property type="match status" value="1"/>
</dbReference>
<dbReference type="Pfam" id="PF00297">
    <property type="entry name" value="Ribosomal_L3"/>
    <property type="match status" value="1"/>
</dbReference>
<dbReference type="SUPFAM" id="SSF50447">
    <property type="entry name" value="Translation proteins"/>
    <property type="match status" value="1"/>
</dbReference>
<dbReference type="PROSITE" id="PS00474">
    <property type="entry name" value="RIBOSOMAL_L3"/>
    <property type="match status" value="1"/>
</dbReference>
<accession>Q9SKX4</accession>
<accession>Q8LEQ9</accession>
<evidence type="ECO:0000250" key="1"/>
<evidence type="ECO:0000255" key="2"/>
<evidence type="ECO:0000256" key="3">
    <source>
        <dbReference type="SAM" id="MobiDB-lite"/>
    </source>
</evidence>
<evidence type="ECO:0000303" key="4">
    <source>
    </source>
</evidence>
<evidence type="ECO:0000305" key="5"/>
<sequence>MAIAMAVVSFPSLLNKTTLSSSLFTPTFLPAKSSSLLIKSSPKTRFVVSSSMEAGIGVMGSKLGMMSFFEEDGTVVPVTVVGFREGNIVTQIKTLATDGYDAVQIGYRRVRDKKLTKPETGHLQKAGTIPMRHLQEFRLTNIEGFEPNQKLVFDEIFKEGDLVDVAGTTIGKGFQGGIKRHHFKRGQMTHGSKSHRALGSIGAGTTPGRVYKGKKMPGRMGGTRTKIRKLKIVKVDKELNVVMIKGALPGKPGNLLRITPAKIVGVNIPKN</sequence>
<comment type="function">
    <text evidence="1">One of the primary rRNA binding proteins, it binds directly near the 3'-end of the 23S rRNA, where it nucleates assembly of the 50S subunit.</text>
</comment>
<comment type="subunit">
    <text evidence="1">Part of the 50S ribosomal subunit.</text>
</comment>
<comment type="subcellular location">
    <subcellularLocation>
        <location evidence="5">Plastid</location>
        <location evidence="5">Chloroplast</location>
    </subcellularLocation>
</comment>
<comment type="similarity">
    <text evidence="5">Belongs to the universal ribosomal protein uL3 family.</text>
</comment>
<organism>
    <name type="scientific">Arabidopsis thaliana</name>
    <name type="common">Mouse-ear cress</name>
    <dbReference type="NCBI Taxonomy" id="3702"/>
    <lineage>
        <taxon>Eukaryota</taxon>
        <taxon>Viridiplantae</taxon>
        <taxon>Streptophyta</taxon>
        <taxon>Embryophyta</taxon>
        <taxon>Tracheophyta</taxon>
        <taxon>Spermatophyta</taxon>
        <taxon>Magnoliopsida</taxon>
        <taxon>eudicotyledons</taxon>
        <taxon>Gunneridae</taxon>
        <taxon>Pentapetalae</taxon>
        <taxon>rosids</taxon>
        <taxon>malvids</taxon>
        <taxon>Brassicales</taxon>
        <taxon>Brassicaceae</taxon>
        <taxon>Camelineae</taxon>
        <taxon>Arabidopsis</taxon>
    </lineage>
</organism>
<feature type="transit peptide" description="Chloroplast" evidence="2">
    <location>
        <begin position="1"/>
        <end position="49"/>
    </location>
</feature>
<feature type="chain" id="PRO_0000030532" description="Large ribosomal subunit protein uL3c">
    <location>
        <begin position="50"/>
        <end position="271"/>
    </location>
</feature>
<feature type="region of interest" description="Disordered" evidence="3">
    <location>
        <begin position="190"/>
        <end position="222"/>
    </location>
</feature>
<feature type="sequence conflict" description="In Ref. 3; AAM62519." evidence="5" ref="3">
    <original>T</original>
    <variation>S</variation>
    <location>
        <position position="17"/>
    </location>
</feature>
<name>RK3A_ARATH</name>